<dbReference type="EC" id="2.1.3.2" evidence="1"/>
<dbReference type="EMBL" id="CP000117">
    <property type="protein sequence ID" value="ABA20798.1"/>
    <property type="molecule type" value="Genomic_DNA"/>
</dbReference>
<dbReference type="SMR" id="Q3MDY8"/>
<dbReference type="STRING" id="240292.Ava_1174"/>
<dbReference type="KEGG" id="ava:Ava_1174"/>
<dbReference type="eggNOG" id="COG0540">
    <property type="taxonomic scope" value="Bacteria"/>
</dbReference>
<dbReference type="HOGENOM" id="CLU_043846_2_0_3"/>
<dbReference type="UniPathway" id="UPA00070">
    <property type="reaction ID" value="UER00116"/>
</dbReference>
<dbReference type="Proteomes" id="UP000002533">
    <property type="component" value="Chromosome"/>
</dbReference>
<dbReference type="GO" id="GO:0005829">
    <property type="term" value="C:cytosol"/>
    <property type="evidence" value="ECO:0007669"/>
    <property type="project" value="TreeGrafter"/>
</dbReference>
<dbReference type="GO" id="GO:0016597">
    <property type="term" value="F:amino acid binding"/>
    <property type="evidence" value="ECO:0007669"/>
    <property type="project" value="InterPro"/>
</dbReference>
<dbReference type="GO" id="GO:0004070">
    <property type="term" value="F:aspartate carbamoyltransferase activity"/>
    <property type="evidence" value="ECO:0007669"/>
    <property type="project" value="UniProtKB-UniRule"/>
</dbReference>
<dbReference type="GO" id="GO:0006207">
    <property type="term" value="P:'de novo' pyrimidine nucleobase biosynthetic process"/>
    <property type="evidence" value="ECO:0007669"/>
    <property type="project" value="InterPro"/>
</dbReference>
<dbReference type="GO" id="GO:0044205">
    <property type="term" value="P:'de novo' UMP biosynthetic process"/>
    <property type="evidence" value="ECO:0007669"/>
    <property type="project" value="UniProtKB-UniRule"/>
</dbReference>
<dbReference type="GO" id="GO:0006520">
    <property type="term" value="P:amino acid metabolic process"/>
    <property type="evidence" value="ECO:0007669"/>
    <property type="project" value="InterPro"/>
</dbReference>
<dbReference type="Gene3D" id="3.40.50.1370">
    <property type="entry name" value="Aspartate/ornithine carbamoyltransferase"/>
    <property type="match status" value="2"/>
</dbReference>
<dbReference type="HAMAP" id="MF_00001">
    <property type="entry name" value="Asp_carb_tr"/>
    <property type="match status" value="1"/>
</dbReference>
<dbReference type="InterPro" id="IPR006132">
    <property type="entry name" value="Asp/Orn_carbamoyltranf_P-bd"/>
</dbReference>
<dbReference type="InterPro" id="IPR006130">
    <property type="entry name" value="Asp/Orn_carbamoylTrfase"/>
</dbReference>
<dbReference type="InterPro" id="IPR036901">
    <property type="entry name" value="Asp/Orn_carbamoylTrfase_sf"/>
</dbReference>
<dbReference type="InterPro" id="IPR002082">
    <property type="entry name" value="Asp_carbamoyltransf"/>
</dbReference>
<dbReference type="InterPro" id="IPR006131">
    <property type="entry name" value="Asp_carbamoyltransf_Asp/Orn-bd"/>
</dbReference>
<dbReference type="NCBIfam" id="TIGR00670">
    <property type="entry name" value="asp_carb_tr"/>
    <property type="match status" value="1"/>
</dbReference>
<dbReference type="NCBIfam" id="NF002032">
    <property type="entry name" value="PRK00856.1"/>
    <property type="match status" value="1"/>
</dbReference>
<dbReference type="PANTHER" id="PTHR45753:SF6">
    <property type="entry name" value="ASPARTATE CARBAMOYLTRANSFERASE"/>
    <property type="match status" value="1"/>
</dbReference>
<dbReference type="PANTHER" id="PTHR45753">
    <property type="entry name" value="ORNITHINE CARBAMOYLTRANSFERASE, MITOCHONDRIAL"/>
    <property type="match status" value="1"/>
</dbReference>
<dbReference type="Pfam" id="PF00185">
    <property type="entry name" value="OTCace"/>
    <property type="match status" value="1"/>
</dbReference>
<dbReference type="Pfam" id="PF02729">
    <property type="entry name" value="OTCace_N"/>
    <property type="match status" value="1"/>
</dbReference>
<dbReference type="PRINTS" id="PR00100">
    <property type="entry name" value="AOTCASE"/>
</dbReference>
<dbReference type="PRINTS" id="PR00101">
    <property type="entry name" value="ATCASE"/>
</dbReference>
<dbReference type="SUPFAM" id="SSF53671">
    <property type="entry name" value="Aspartate/ornithine carbamoyltransferase"/>
    <property type="match status" value="1"/>
</dbReference>
<dbReference type="PROSITE" id="PS00097">
    <property type="entry name" value="CARBAMOYLTRANSFERASE"/>
    <property type="match status" value="1"/>
</dbReference>
<sequence length="333" mass="36582">MPTSTWNRHHVLSLADFTAAEYDIVLKTAASFQEVLSRRTKKVPALQGQVVANLFFEPSTRTRSSFELAAKRLSADTLNFAASTSSMTKGETILDTAKTYLAMGTDIMVIRHKEAGVPNAIAQEMDRLGVRVSVLNAGDGQHEHPSQGLLDLFTICSLVDPANPRLELLQGKKIAIVGDILHSRVARSNIWSLIASGAQVHLAAPPTLLPKLFAEYIFGEETAPPGQLFIHWQLEPALQDADFVMTLRLQKERMTAHLLPSLREYHQLFGITRAKLQLCQPNVKVLHPGPVNRGVEISSDLMDDPEFSLIQSQVTSGVAVRMALLYLIGSGKT</sequence>
<evidence type="ECO:0000255" key="1">
    <source>
        <dbReference type="HAMAP-Rule" id="MF_00001"/>
    </source>
</evidence>
<protein>
    <recommendedName>
        <fullName evidence="1">Aspartate carbamoyltransferase catalytic subunit</fullName>
        <ecNumber evidence="1">2.1.3.2</ecNumber>
    </recommendedName>
    <alternativeName>
        <fullName evidence="1">Aspartate transcarbamylase</fullName>
        <shortName evidence="1">ATCase</shortName>
    </alternativeName>
</protein>
<name>PYRB_TRIV2</name>
<comment type="function">
    <text evidence="1">Catalyzes the condensation of carbamoyl phosphate and aspartate to form carbamoyl aspartate and inorganic phosphate, the committed step in the de novo pyrimidine nucleotide biosynthesis pathway.</text>
</comment>
<comment type="catalytic activity">
    <reaction evidence="1">
        <text>carbamoyl phosphate + L-aspartate = N-carbamoyl-L-aspartate + phosphate + H(+)</text>
        <dbReference type="Rhea" id="RHEA:20013"/>
        <dbReference type="ChEBI" id="CHEBI:15378"/>
        <dbReference type="ChEBI" id="CHEBI:29991"/>
        <dbReference type="ChEBI" id="CHEBI:32814"/>
        <dbReference type="ChEBI" id="CHEBI:43474"/>
        <dbReference type="ChEBI" id="CHEBI:58228"/>
        <dbReference type="EC" id="2.1.3.2"/>
    </reaction>
</comment>
<comment type="pathway">
    <text evidence="1">Pyrimidine metabolism; UMP biosynthesis via de novo pathway; (S)-dihydroorotate from bicarbonate: step 2/3.</text>
</comment>
<comment type="subunit">
    <text evidence="1">Heterododecamer (2C3:3R2) of six catalytic PyrB chains organized as two trimers (C3), and six regulatory PyrI chains organized as three dimers (R2).</text>
</comment>
<comment type="similarity">
    <text evidence="1">Belongs to the aspartate/ornithine carbamoyltransferase superfamily. ATCase family.</text>
</comment>
<feature type="chain" id="PRO_0000321069" description="Aspartate carbamoyltransferase catalytic subunit">
    <location>
        <begin position="1"/>
        <end position="333"/>
    </location>
</feature>
<feature type="binding site" evidence="1">
    <location>
        <position position="61"/>
    </location>
    <ligand>
        <name>carbamoyl phosphate</name>
        <dbReference type="ChEBI" id="CHEBI:58228"/>
    </ligand>
</feature>
<feature type="binding site" evidence="1">
    <location>
        <position position="62"/>
    </location>
    <ligand>
        <name>carbamoyl phosphate</name>
        <dbReference type="ChEBI" id="CHEBI:58228"/>
    </ligand>
</feature>
<feature type="binding site" evidence="1">
    <location>
        <position position="89"/>
    </location>
    <ligand>
        <name>L-aspartate</name>
        <dbReference type="ChEBI" id="CHEBI:29991"/>
    </ligand>
</feature>
<feature type="binding site" evidence="1">
    <location>
        <position position="111"/>
    </location>
    <ligand>
        <name>carbamoyl phosphate</name>
        <dbReference type="ChEBI" id="CHEBI:58228"/>
    </ligand>
</feature>
<feature type="binding site" evidence="1">
    <location>
        <position position="144"/>
    </location>
    <ligand>
        <name>carbamoyl phosphate</name>
        <dbReference type="ChEBI" id="CHEBI:58228"/>
    </ligand>
</feature>
<feature type="binding site" evidence="1">
    <location>
        <position position="147"/>
    </location>
    <ligand>
        <name>carbamoyl phosphate</name>
        <dbReference type="ChEBI" id="CHEBI:58228"/>
    </ligand>
</feature>
<feature type="binding site" evidence="1">
    <location>
        <position position="184"/>
    </location>
    <ligand>
        <name>L-aspartate</name>
        <dbReference type="ChEBI" id="CHEBI:29991"/>
    </ligand>
</feature>
<feature type="binding site" evidence="1">
    <location>
        <position position="248"/>
    </location>
    <ligand>
        <name>L-aspartate</name>
        <dbReference type="ChEBI" id="CHEBI:29991"/>
    </ligand>
</feature>
<feature type="binding site" evidence="1">
    <location>
        <position position="289"/>
    </location>
    <ligand>
        <name>carbamoyl phosphate</name>
        <dbReference type="ChEBI" id="CHEBI:58228"/>
    </ligand>
</feature>
<feature type="binding site" evidence="1">
    <location>
        <position position="290"/>
    </location>
    <ligand>
        <name>carbamoyl phosphate</name>
        <dbReference type="ChEBI" id="CHEBI:58228"/>
    </ligand>
</feature>
<accession>Q3MDY8</accession>
<organism>
    <name type="scientific">Trichormus variabilis (strain ATCC 29413 / PCC 7937)</name>
    <name type="common">Anabaena variabilis</name>
    <dbReference type="NCBI Taxonomy" id="240292"/>
    <lineage>
        <taxon>Bacteria</taxon>
        <taxon>Bacillati</taxon>
        <taxon>Cyanobacteriota</taxon>
        <taxon>Cyanophyceae</taxon>
        <taxon>Nostocales</taxon>
        <taxon>Nostocaceae</taxon>
        <taxon>Trichormus</taxon>
    </lineage>
</organism>
<gene>
    <name evidence="1" type="primary">pyrB</name>
    <name type="ordered locus">Ava_1174</name>
</gene>
<proteinExistence type="inferred from homology"/>
<reference key="1">
    <citation type="journal article" date="2014" name="Stand. Genomic Sci.">
        <title>Complete genome sequence of Anabaena variabilis ATCC 29413.</title>
        <authorList>
            <person name="Thiel T."/>
            <person name="Pratte B.S."/>
            <person name="Zhong J."/>
            <person name="Goodwin L."/>
            <person name="Copeland A."/>
            <person name="Lucas S."/>
            <person name="Han C."/>
            <person name="Pitluck S."/>
            <person name="Land M.L."/>
            <person name="Kyrpides N.C."/>
            <person name="Woyke T."/>
        </authorList>
    </citation>
    <scope>NUCLEOTIDE SEQUENCE [LARGE SCALE GENOMIC DNA]</scope>
    <source>
        <strain>ATCC 29413 / PCC 7937</strain>
    </source>
</reference>
<keyword id="KW-0665">Pyrimidine biosynthesis</keyword>
<keyword id="KW-0808">Transferase</keyword>